<sequence length="37" mass="4092">MVETLLSGIVLGLIPITLVGLFVTAYLQYRRGDQLDI</sequence>
<dbReference type="EMBL" id="EU342371">
    <property type="protein sequence ID" value="ABY26808.1"/>
    <property type="molecule type" value="Genomic_DNA"/>
</dbReference>
<dbReference type="EMBL" id="AP009568">
    <property type="protein sequence ID" value="BAH11210.1"/>
    <property type="molecule type" value="Genomic_DNA"/>
</dbReference>
<dbReference type="RefSeq" id="YP_001876595.1">
    <property type="nucleotide sequence ID" value="NC_010654.1"/>
</dbReference>
<dbReference type="SMR" id="B2Y1X8"/>
<dbReference type="GeneID" id="6276172"/>
<dbReference type="GO" id="GO:0009535">
    <property type="term" value="C:chloroplast thylakoid membrane"/>
    <property type="evidence" value="ECO:0007669"/>
    <property type="project" value="UniProtKB-SubCell"/>
</dbReference>
<dbReference type="GO" id="GO:0009512">
    <property type="term" value="C:cytochrome b6f complex"/>
    <property type="evidence" value="ECO:0007669"/>
    <property type="project" value="InterPro"/>
</dbReference>
<dbReference type="GO" id="GO:0045158">
    <property type="term" value="F:electron transporter, transferring electrons within cytochrome b6/f complex of photosystem II activity"/>
    <property type="evidence" value="ECO:0007669"/>
    <property type="project" value="UniProtKB-UniRule"/>
</dbReference>
<dbReference type="GO" id="GO:0017004">
    <property type="term" value="P:cytochrome complex assembly"/>
    <property type="evidence" value="ECO:0007669"/>
    <property type="project" value="UniProtKB-UniRule"/>
</dbReference>
<dbReference type="GO" id="GO:0015979">
    <property type="term" value="P:photosynthesis"/>
    <property type="evidence" value="ECO:0007669"/>
    <property type="project" value="UniProtKB-KW"/>
</dbReference>
<dbReference type="HAMAP" id="MF_00432">
    <property type="entry name" value="Cytb6_f_PetG"/>
    <property type="match status" value="1"/>
</dbReference>
<dbReference type="InterPro" id="IPR003683">
    <property type="entry name" value="Cyt_6/f_cplx_su5"/>
</dbReference>
<dbReference type="InterPro" id="IPR036099">
    <property type="entry name" value="Cyt_6/f_cplx_su5_sf"/>
</dbReference>
<dbReference type="NCBIfam" id="NF001907">
    <property type="entry name" value="PRK00665.1"/>
    <property type="match status" value="1"/>
</dbReference>
<dbReference type="Pfam" id="PF02529">
    <property type="entry name" value="PetG"/>
    <property type="match status" value="1"/>
</dbReference>
<dbReference type="PIRSF" id="PIRSF000034">
    <property type="entry name" value="Cyt_b6-f_V"/>
    <property type="match status" value="1"/>
</dbReference>
<dbReference type="SUPFAM" id="SSF103446">
    <property type="entry name" value="PetG subunit of the cytochrome b6f complex"/>
    <property type="match status" value="1"/>
</dbReference>
<comment type="function">
    <text evidence="1">Component of the cytochrome b6-f complex, which mediates electron transfer between photosystem II (PSII) and photosystem I (PSI), cyclic electron flow around PSI, and state transitions. PetG is required for either the stability or assembly of the cytochrome b6-f complex.</text>
</comment>
<comment type="subunit">
    <text evidence="1">The 4 large subunits of the cytochrome b6-f complex are cytochrome b6, subunit IV (17 kDa polypeptide, PetD), cytochrome f and the Rieske protein, while the 4 small subunits are PetG, PetL, PetM and PetN. The complex functions as a dimer.</text>
</comment>
<comment type="subcellular location">
    <subcellularLocation>
        <location evidence="1">Plastid</location>
        <location evidence="1">Chloroplast thylakoid membrane</location>
        <topology evidence="1">Single-pass membrane protein</topology>
    </subcellularLocation>
</comment>
<comment type="similarity">
    <text evidence="1">Belongs to the PetG family.</text>
</comment>
<proteinExistence type="inferred from homology"/>
<geneLocation type="chloroplast"/>
<name>PETG_WELMI</name>
<feature type="chain" id="PRO_0000355411" description="Cytochrome b6-f complex subunit 5">
    <location>
        <begin position="1"/>
        <end position="37"/>
    </location>
</feature>
<feature type="transmembrane region" description="Helical" evidence="1">
    <location>
        <begin position="5"/>
        <end position="25"/>
    </location>
</feature>
<reference key="1">
    <citation type="journal article" date="2008" name="BMC Evol. Biol.">
        <title>The complete plastid genome sequence of Welwitschia mirabilis: an unusually compact plastome with accelerated divergence rates.</title>
        <authorList>
            <person name="McCoy S.R."/>
            <person name="Kuehl J.V."/>
            <person name="Boore J.L."/>
            <person name="Raubeson L.A."/>
        </authorList>
    </citation>
    <scope>NUCLEOTIDE SEQUENCE [LARGE SCALE GENOMIC DNA]</scope>
</reference>
<reference key="2">
    <citation type="journal article" date="2009" name="Mol. Phylogenet. Evol.">
        <title>Evolution of reduced and compact chloroplast genomes (cpDNAs) in gnetophytes: Selection toward a lower-cost strategy.</title>
        <authorList>
            <person name="Wu C.-S."/>
            <person name="Lai Y.-T."/>
            <person name="Lin C.-P."/>
            <person name="Wang Y.-N."/>
            <person name="Chaw S.-M."/>
        </authorList>
    </citation>
    <scope>NUCLEOTIDE SEQUENCE [LARGE SCALE GENOMIC DNA]</scope>
</reference>
<organism>
    <name type="scientific">Welwitschia mirabilis</name>
    <name type="common">Tree tumbo</name>
    <name type="synonym">Welwitschia bainesii</name>
    <dbReference type="NCBI Taxonomy" id="3377"/>
    <lineage>
        <taxon>Eukaryota</taxon>
        <taxon>Viridiplantae</taxon>
        <taxon>Streptophyta</taxon>
        <taxon>Embryophyta</taxon>
        <taxon>Tracheophyta</taxon>
        <taxon>Spermatophyta</taxon>
        <taxon>Gnetopsida</taxon>
        <taxon>Gnetidae</taxon>
        <taxon>Welwitschiales</taxon>
        <taxon>Welwitschiaceae</taxon>
        <taxon>Welwitschia</taxon>
    </lineage>
</organism>
<accession>B2Y1X8</accession>
<accession>B7ZI30</accession>
<keyword id="KW-0150">Chloroplast</keyword>
<keyword id="KW-0249">Electron transport</keyword>
<keyword id="KW-0472">Membrane</keyword>
<keyword id="KW-0602">Photosynthesis</keyword>
<keyword id="KW-0934">Plastid</keyword>
<keyword id="KW-0793">Thylakoid</keyword>
<keyword id="KW-0812">Transmembrane</keyword>
<keyword id="KW-1133">Transmembrane helix</keyword>
<keyword id="KW-0813">Transport</keyword>
<evidence type="ECO:0000255" key="1">
    <source>
        <dbReference type="HAMAP-Rule" id="MF_00432"/>
    </source>
</evidence>
<gene>
    <name evidence="1" type="primary">petG</name>
</gene>
<protein>
    <recommendedName>
        <fullName evidence="1">Cytochrome b6-f complex subunit 5</fullName>
    </recommendedName>
    <alternativeName>
        <fullName evidence="1">Cytochrome b6-f complex subunit PetG</fullName>
    </alternativeName>
    <alternativeName>
        <fullName evidence="1">Cytochrome b6-f complex subunit V</fullName>
    </alternativeName>
</protein>